<gene>
    <name evidence="1" type="primary">mutL</name>
    <name type="ordered locus">RC1361</name>
</gene>
<keyword id="KW-0227">DNA damage</keyword>
<keyword id="KW-0234">DNA repair</keyword>
<organism>
    <name type="scientific">Rickettsia conorii (strain ATCC VR-613 / Malish 7)</name>
    <dbReference type="NCBI Taxonomy" id="272944"/>
    <lineage>
        <taxon>Bacteria</taxon>
        <taxon>Pseudomonadati</taxon>
        <taxon>Pseudomonadota</taxon>
        <taxon>Alphaproteobacteria</taxon>
        <taxon>Rickettsiales</taxon>
        <taxon>Rickettsiaceae</taxon>
        <taxon>Rickettsieae</taxon>
        <taxon>Rickettsia</taxon>
        <taxon>spotted fever group</taxon>
    </lineage>
</organism>
<dbReference type="EMBL" id="AE006914">
    <property type="protein sequence ID" value="AAL03899.1"/>
    <property type="molecule type" value="Genomic_DNA"/>
</dbReference>
<dbReference type="PIR" id="A97870">
    <property type="entry name" value="A97870"/>
</dbReference>
<dbReference type="RefSeq" id="WP_010977912.1">
    <property type="nucleotide sequence ID" value="NC_003103.1"/>
</dbReference>
<dbReference type="SMR" id="Q92FW6"/>
<dbReference type="GeneID" id="928512"/>
<dbReference type="KEGG" id="rco:RC1361"/>
<dbReference type="PATRIC" id="fig|272944.4.peg.1562"/>
<dbReference type="HOGENOM" id="CLU_004131_4_2_5"/>
<dbReference type="Proteomes" id="UP000000816">
    <property type="component" value="Chromosome"/>
</dbReference>
<dbReference type="GO" id="GO:0032300">
    <property type="term" value="C:mismatch repair complex"/>
    <property type="evidence" value="ECO:0007669"/>
    <property type="project" value="InterPro"/>
</dbReference>
<dbReference type="GO" id="GO:0005524">
    <property type="term" value="F:ATP binding"/>
    <property type="evidence" value="ECO:0007669"/>
    <property type="project" value="InterPro"/>
</dbReference>
<dbReference type="GO" id="GO:0016887">
    <property type="term" value="F:ATP hydrolysis activity"/>
    <property type="evidence" value="ECO:0007669"/>
    <property type="project" value="InterPro"/>
</dbReference>
<dbReference type="GO" id="GO:0140664">
    <property type="term" value="F:ATP-dependent DNA damage sensor activity"/>
    <property type="evidence" value="ECO:0007669"/>
    <property type="project" value="InterPro"/>
</dbReference>
<dbReference type="GO" id="GO:0030983">
    <property type="term" value="F:mismatched DNA binding"/>
    <property type="evidence" value="ECO:0007669"/>
    <property type="project" value="InterPro"/>
</dbReference>
<dbReference type="GO" id="GO:0006298">
    <property type="term" value="P:mismatch repair"/>
    <property type="evidence" value="ECO:0007669"/>
    <property type="project" value="UniProtKB-UniRule"/>
</dbReference>
<dbReference type="CDD" id="cd16926">
    <property type="entry name" value="HATPase_MutL-MLH-PMS-like"/>
    <property type="match status" value="1"/>
</dbReference>
<dbReference type="CDD" id="cd00782">
    <property type="entry name" value="MutL_Trans"/>
    <property type="match status" value="1"/>
</dbReference>
<dbReference type="FunFam" id="3.30.565.10:FF:000003">
    <property type="entry name" value="DNA mismatch repair endonuclease MutL"/>
    <property type="match status" value="1"/>
</dbReference>
<dbReference type="Gene3D" id="3.30.230.10">
    <property type="match status" value="1"/>
</dbReference>
<dbReference type="Gene3D" id="3.30.565.10">
    <property type="entry name" value="Histidine kinase-like ATPase, C-terminal domain"/>
    <property type="match status" value="1"/>
</dbReference>
<dbReference type="Gene3D" id="3.30.1540.20">
    <property type="entry name" value="MutL, C-terminal domain, dimerisation subdomain"/>
    <property type="match status" value="1"/>
</dbReference>
<dbReference type="Gene3D" id="3.30.1370.100">
    <property type="entry name" value="MutL, C-terminal domain, regulatory subdomain"/>
    <property type="match status" value="1"/>
</dbReference>
<dbReference type="HAMAP" id="MF_00149">
    <property type="entry name" value="DNA_mis_repair"/>
    <property type="match status" value="1"/>
</dbReference>
<dbReference type="InterPro" id="IPR014762">
    <property type="entry name" value="DNA_mismatch_repair_CS"/>
</dbReference>
<dbReference type="InterPro" id="IPR020667">
    <property type="entry name" value="DNA_mismatch_repair_MutL"/>
</dbReference>
<dbReference type="InterPro" id="IPR013507">
    <property type="entry name" value="DNA_mismatch_S5_2-like"/>
</dbReference>
<dbReference type="InterPro" id="IPR036890">
    <property type="entry name" value="HATPase_C_sf"/>
</dbReference>
<dbReference type="InterPro" id="IPR002099">
    <property type="entry name" value="MutL/Mlh/PMS"/>
</dbReference>
<dbReference type="InterPro" id="IPR038973">
    <property type="entry name" value="MutL/Mlh/Pms-like"/>
</dbReference>
<dbReference type="InterPro" id="IPR014790">
    <property type="entry name" value="MutL_C"/>
</dbReference>
<dbReference type="InterPro" id="IPR042120">
    <property type="entry name" value="MutL_C_dimsub"/>
</dbReference>
<dbReference type="InterPro" id="IPR042121">
    <property type="entry name" value="MutL_C_regsub"/>
</dbReference>
<dbReference type="InterPro" id="IPR037198">
    <property type="entry name" value="MutL_C_sf"/>
</dbReference>
<dbReference type="InterPro" id="IPR020568">
    <property type="entry name" value="Ribosomal_Su5_D2-typ_SF"/>
</dbReference>
<dbReference type="InterPro" id="IPR014721">
    <property type="entry name" value="Ribsml_uS5_D2-typ_fold_subgr"/>
</dbReference>
<dbReference type="NCBIfam" id="TIGR00585">
    <property type="entry name" value="mutl"/>
    <property type="match status" value="1"/>
</dbReference>
<dbReference type="NCBIfam" id="NF000952">
    <property type="entry name" value="PRK00095.2-2"/>
    <property type="match status" value="1"/>
</dbReference>
<dbReference type="NCBIfam" id="NF000953">
    <property type="entry name" value="PRK00095.2-4"/>
    <property type="match status" value="1"/>
</dbReference>
<dbReference type="PANTHER" id="PTHR10073">
    <property type="entry name" value="DNA MISMATCH REPAIR PROTEIN MLH, PMS, MUTL"/>
    <property type="match status" value="1"/>
</dbReference>
<dbReference type="PANTHER" id="PTHR10073:SF12">
    <property type="entry name" value="DNA MISMATCH REPAIR PROTEIN MLH1"/>
    <property type="match status" value="1"/>
</dbReference>
<dbReference type="Pfam" id="PF01119">
    <property type="entry name" value="DNA_mis_repair"/>
    <property type="match status" value="1"/>
</dbReference>
<dbReference type="Pfam" id="PF13589">
    <property type="entry name" value="HATPase_c_3"/>
    <property type="match status" value="1"/>
</dbReference>
<dbReference type="Pfam" id="PF08676">
    <property type="entry name" value="MutL_C"/>
    <property type="match status" value="1"/>
</dbReference>
<dbReference type="SMART" id="SM01340">
    <property type="entry name" value="DNA_mis_repair"/>
    <property type="match status" value="1"/>
</dbReference>
<dbReference type="SMART" id="SM00853">
    <property type="entry name" value="MutL_C"/>
    <property type="match status" value="1"/>
</dbReference>
<dbReference type="SUPFAM" id="SSF55874">
    <property type="entry name" value="ATPase domain of HSP90 chaperone/DNA topoisomerase II/histidine kinase"/>
    <property type="match status" value="1"/>
</dbReference>
<dbReference type="SUPFAM" id="SSF118116">
    <property type="entry name" value="DNA mismatch repair protein MutL"/>
    <property type="match status" value="1"/>
</dbReference>
<dbReference type="SUPFAM" id="SSF54211">
    <property type="entry name" value="Ribosomal protein S5 domain 2-like"/>
    <property type="match status" value="1"/>
</dbReference>
<dbReference type="PROSITE" id="PS00058">
    <property type="entry name" value="DNA_MISMATCH_REPAIR_1"/>
    <property type="match status" value="1"/>
</dbReference>
<name>MUTL_RICCN</name>
<reference key="1">
    <citation type="journal article" date="2001" name="Science">
        <title>Mechanisms of evolution in Rickettsia conorii and R. prowazekii.</title>
        <authorList>
            <person name="Ogata H."/>
            <person name="Audic S."/>
            <person name="Renesto-Audiffren P."/>
            <person name="Fournier P.-E."/>
            <person name="Barbe V."/>
            <person name="Samson D."/>
            <person name="Roux V."/>
            <person name="Cossart P."/>
            <person name="Weissenbach J."/>
            <person name="Claverie J.-M."/>
            <person name="Raoult D."/>
        </authorList>
    </citation>
    <scope>NUCLEOTIDE SEQUENCE [LARGE SCALE GENOMIC DNA]</scope>
    <source>
        <strain>ATCC VR-613 / Malish 7</strain>
    </source>
</reference>
<evidence type="ECO:0000255" key="1">
    <source>
        <dbReference type="HAMAP-Rule" id="MF_00149"/>
    </source>
</evidence>
<feature type="chain" id="PRO_0000177964" description="DNA mismatch repair protein MutL">
    <location>
        <begin position="1"/>
        <end position="610"/>
    </location>
</feature>
<comment type="function">
    <text evidence="1">This protein is involved in the repair of mismatches in DNA. It is required for dam-dependent methyl-directed DNA mismatch repair. May act as a 'molecular matchmaker', a protein that promotes the formation of a stable complex between two or more DNA-binding proteins in an ATP-dependent manner without itself being part of a final effector complex.</text>
</comment>
<comment type="similarity">
    <text evidence="1">Belongs to the DNA mismatch repair MutL/HexB family.</text>
</comment>
<protein>
    <recommendedName>
        <fullName evidence="1">DNA mismatch repair protein MutL</fullName>
    </recommendedName>
</protein>
<proteinExistence type="inferred from homology"/>
<sequence length="610" mass="68921">MTIKFLSESTINRIAAGEVIERPASVVKELVENAVDASSTKIDIILERAGKNLIIISDDGIGMTDKELEIAVERHTTSKFDESDFLNINTFGFRGEALPSIAAISKMLITSKKRDADKAFQIKLIGGNEKQVTISVHNEGTKIEIRDLFFATPARLKFLRADKTELTATVDVVKKIALAHPKISFSLTHDGKNLLKLKGQNKDAETNLKQRIIDVIGDDFIKNAAYIDFKTPDFSICGYTSSPTYNRASSEDQFLFINNRPVKDKLLQVALRVAYQDYLARDRYPICAIFLQIDPQLVDVNVHPAKAEVRFHDPNYVRNLLIEAIKNALTNKSHVTSTTIASDVLELFKNPLVNKQSPVSKVINVNSKSADYRPTTHSTLNTVPQNHVCQKLIDTLSHAKIEQEVENRIEHEQQTRKQYKLGAAKAQLHTTYIISQTEDSIVITDQHAAHERLGYEKIKDYLKTEELIKQRLLIPEIVELPNEKKADCLYDHREKLYKLGLTLEKFGEKSIIVTEIPNILGDVNVQKLIQDLADHLSDFGKNIALTELIEHVTETYACHYSIRAGRKLSADEMNALLRQMENTPLSGQCNHGRPTYIELKLKDIERLFGR</sequence>
<accession>Q92FW6</accession>